<reference key="1">
    <citation type="submission" date="2006-12" db="EMBL/GenBank/DDBJ databases">
        <title>Complete sequence of Shewanella sp. W3-18-1.</title>
        <authorList>
            <consortium name="US DOE Joint Genome Institute"/>
            <person name="Copeland A."/>
            <person name="Lucas S."/>
            <person name="Lapidus A."/>
            <person name="Barry K."/>
            <person name="Detter J.C."/>
            <person name="Glavina del Rio T."/>
            <person name="Hammon N."/>
            <person name="Israni S."/>
            <person name="Dalin E."/>
            <person name="Tice H."/>
            <person name="Pitluck S."/>
            <person name="Chain P."/>
            <person name="Malfatti S."/>
            <person name="Shin M."/>
            <person name="Vergez L."/>
            <person name="Schmutz J."/>
            <person name="Larimer F."/>
            <person name="Land M."/>
            <person name="Hauser L."/>
            <person name="Kyrpides N."/>
            <person name="Lykidis A."/>
            <person name="Tiedje J."/>
            <person name="Richardson P."/>
        </authorList>
    </citation>
    <scope>NUCLEOTIDE SEQUENCE [LARGE SCALE GENOMIC DNA]</scope>
    <source>
        <strain>W3-18-1</strain>
    </source>
</reference>
<organism>
    <name type="scientific">Shewanella sp. (strain W3-18-1)</name>
    <dbReference type="NCBI Taxonomy" id="351745"/>
    <lineage>
        <taxon>Bacteria</taxon>
        <taxon>Pseudomonadati</taxon>
        <taxon>Pseudomonadota</taxon>
        <taxon>Gammaproteobacteria</taxon>
        <taxon>Alteromonadales</taxon>
        <taxon>Shewanellaceae</taxon>
        <taxon>Shewanella</taxon>
    </lineage>
</organism>
<sequence>MNPRRKKRLTLAVALIGGVAAIASLLLYALNSNLNLFYTPSEIVNGKTDTGVKPDVGQRIRVGGMVTVGSMVRDPDSLHVQFAVHDSLGGEILVTYDDLLPDLFREGQGIVAQGVLTAEGKLEATEVLAKHDENYMPPEVAEAMGQKHEKLDYSQQKAPDTK</sequence>
<keyword id="KW-0997">Cell inner membrane</keyword>
<keyword id="KW-1003">Cell membrane</keyword>
<keyword id="KW-0201">Cytochrome c-type biogenesis</keyword>
<keyword id="KW-0349">Heme</keyword>
<keyword id="KW-0408">Iron</keyword>
<keyword id="KW-0472">Membrane</keyword>
<keyword id="KW-0479">Metal-binding</keyword>
<keyword id="KW-0735">Signal-anchor</keyword>
<keyword id="KW-0812">Transmembrane</keyword>
<keyword id="KW-1133">Transmembrane helix</keyword>
<comment type="function">
    <text evidence="1">Heme chaperone required for the biogenesis of c-type cytochromes. Transiently binds heme delivered by CcmC and transfers the heme to apo-cytochromes in a process facilitated by CcmF and CcmH.</text>
</comment>
<comment type="subcellular location">
    <subcellularLocation>
        <location evidence="1">Cell inner membrane</location>
        <topology evidence="1">Single-pass type II membrane protein</topology>
        <orientation evidence="1">Periplasmic side</orientation>
    </subcellularLocation>
</comment>
<comment type="similarity">
    <text evidence="1">Belongs to the CcmE/CycJ family.</text>
</comment>
<dbReference type="EMBL" id="CP000503">
    <property type="protein sequence ID" value="ABM23036.1"/>
    <property type="molecule type" value="Genomic_DNA"/>
</dbReference>
<dbReference type="RefSeq" id="WP_011787583.1">
    <property type="nucleotide sequence ID" value="NC_008750.1"/>
</dbReference>
<dbReference type="SMR" id="A1REE1"/>
<dbReference type="GeneID" id="67441787"/>
<dbReference type="KEGG" id="shw:Sputw3181_0184"/>
<dbReference type="HOGENOM" id="CLU_079503_1_0_6"/>
<dbReference type="Proteomes" id="UP000002597">
    <property type="component" value="Chromosome"/>
</dbReference>
<dbReference type="GO" id="GO:0005886">
    <property type="term" value="C:plasma membrane"/>
    <property type="evidence" value="ECO:0007669"/>
    <property type="project" value="UniProtKB-SubCell"/>
</dbReference>
<dbReference type="GO" id="GO:0020037">
    <property type="term" value="F:heme binding"/>
    <property type="evidence" value="ECO:0007669"/>
    <property type="project" value="InterPro"/>
</dbReference>
<dbReference type="GO" id="GO:0046872">
    <property type="term" value="F:metal ion binding"/>
    <property type="evidence" value="ECO:0007669"/>
    <property type="project" value="UniProtKB-KW"/>
</dbReference>
<dbReference type="GO" id="GO:0017004">
    <property type="term" value="P:cytochrome complex assembly"/>
    <property type="evidence" value="ECO:0007669"/>
    <property type="project" value="UniProtKB-KW"/>
</dbReference>
<dbReference type="FunFam" id="2.40.50.140:FF:000104">
    <property type="entry name" value="Cytochrome c-type biogenesis protein CcmE"/>
    <property type="match status" value="1"/>
</dbReference>
<dbReference type="Gene3D" id="2.40.50.140">
    <property type="entry name" value="Nucleic acid-binding proteins"/>
    <property type="match status" value="1"/>
</dbReference>
<dbReference type="HAMAP" id="MF_01959">
    <property type="entry name" value="CcmE"/>
    <property type="match status" value="1"/>
</dbReference>
<dbReference type="InterPro" id="IPR004329">
    <property type="entry name" value="CcmE"/>
</dbReference>
<dbReference type="InterPro" id="IPR036127">
    <property type="entry name" value="CcmE-like_sf"/>
</dbReference>
<dbReference type="InterPro" id="IPR012340">
    <property type="entry name" value="NA-bd_OB-fold"/>
</dbReference>
<dbReference type="NCBIfam" id="NF009638">
    <property type="entry name" value="PRK13165.1"/>
    <property type="match status" value="1"/>
</dbReference>
<dbReference type="NCBIfam" id="NF009729">
    <property type="entry name" value="PRK13254.1-3"/>
    <property type="match status" value="1"/>
</dbReference>
<dbReference type="PANTHER" id="PTHR34128">
    <property type="entry name" value="CYTOCHROME C-TYPE BIOGENESIS PROTEIN CCME HOMOLOG, MITOCHONDRIAL"/>
    <property type="match status" value="1"/>
</dbReference>
<dbReference type="PANTHER" id="PTHR34128:SF2">
    <property type="entry name" value="CYTOCHROME C-TYPE BIOGENESIS PROTEIN CCME HOMOLOG, MITOCHONDRIAL"/>
    <property type="match status" value="1"/>
</dbReference>
<dbReference type="Pfam" id="PF03100">
    <property type="entry name" value="CcmE"/>
    <property type="match status" value="1"/>
</dbReference>
<dbReference type="SUPFAM" id="SSF82093">
    <property type="entry name" value="Heme chaperone CcmE"/>
    <property type="match status" value="1"/>
</dbReference>
<gene>
    <name evidence="1" type="primary">ccmE</name>
    <name evidence="1" type="synonym">cycJ</name>
    <name type="ordered locus">Sputw3181_0184</name>
</gene>
<protein>
    <recommendedName>
        <fullName evidence="1">Cytochrome c-type biogenesis protein CcmE</fullName>
    </recommendedName>
    <alternativeName>
        <fullName evidence="1">Cytochrome c maturation protein E</fullName>
    </alternativeName>
    <alternativeName>
        <fullName evidence="1">Heme chaperone CcmE</fullName>
    </alternativeName>
</protein>
<feature type="chain" id="PRO_1000070861" description="Cytochrome c-type biogenesis protein CcmE">
    <location>
        <begin position="1"/>
        <end position="162"/>
    </location>
</feature>
<feature type="topological domain" description="Cytoplasmic" evidence="1">
    <location>
        <begin position="1"/>
        <end position="8"/>
    </location>
</feature>
<feature type="transmembrane region" description="Helical; Signal-anchor for type II membrane protein" evidence="1">
    <location>
        <begin position="9"/>
        <end position="29"/>
    </location>
</feature>
<feature type="topological domain" description="Periplasmic" evidence="1">
    <location>
        <begin position="30"/>
        <end position="162"/>
    </location>
</feature>
<feature type="region of interest" description="Disordered" evidence="2">
    <location>
        <begin position="139"/>
        <end position="162"/>
    </location>
</feature>
<feature type="compositionally biased region" description="Polar residues" evidence="2">
    <location>
        <begin position="153"/>
        <end position="162"/>
    </location>
</feature>
<feature type="binding site" description="covalent" evidence="1">
    <location>
        <position position="131"/>
    </location>
    <ligand>
        <name>heme</name>
        <dbReference type="ChEBI" id="CHEBI:30413"/>
    </ligand>
</feature>
<feature type="binding site" description="axial binding residue" evidence="1">
    <location>
        <position position="135"/>
    </location>
    <ligand>
        <name>heme</name>
        <dbReference type="ChEBI" id="CHEBI:30413"/>
    </ligand>
    <ligandPart>
        <name>Fe</name>
        <dbReference type="ChEBI" id="CHEBI:18248"/>
    </ligandPart>
</feature>
<name>CCME_SHESW</name>
<evidence type="ECO:0000255" key="1">
    <source>
        <dbReference type="HAMAP-Rule" id="MF_01959"/>
    </source>
</evidence>
<evidence type="ECO:0000256" key="2">
    <source>
        <dbReference type="SAM" id="MobiDB-lite"/>
    </source>
</evidence>
<proteinExistence type="inferred from homology"/>
<accession>A1REE1</accession>